<organism>
    <name type="scientific">Rattus norvegicus</name>
    <name type="common">Rat</name>
    <dbReference type="NCBI Taxonomy" id="10116"/>
    <lineage>
        <taxon>Eukaryota</taxon>
        <taxon>Metazoa</taxon>
        <taxon>Chordata</taxon>
        <taxon>Craniata</taxon>
        <taxon>Vertebrata</taxon>
        <taxon>Euteleostomi</taxon>
        <taxon>Mammalia</taxon>
        <taxon>Eutheria</taxon>
        <taxon>Euarchontoglires</taxon>
        <taxon>Glires</taxon>
        <taxon>Rodentia</taxon>
        <taxon>Myomorpha</taxon>
        <taxon>Muroidea</taxon>
        <taxon>Muridae</taxon>
        <taxon>Murinae</taxon>
        <taxon>Rattus</taxon>
    </lineage>
</organism>
<feature type="chain" id="PRO_0000063940" description="Aquaporin-2">
    <location>
        <begin position="1"/>
        <end position="271"/>
    </location>
</feature>
<feature type="topological domain" description="Cytoplasmic" evidence="9">
    <location>
        <begin position="1"/>
        <end position="11"/>
    </location>
</feature>
<feature type="transmembrane region" description="Helical" evidence="1">
    <location>
        <begin position="12"/>
        <end position="32"/>
    </location>
</feature>
<feature type="topological domain" description="Extracellular" evidence="9">
    <location>
        <begin position="33"/>
        <end position="40"/>
    </location>
</feature>
<feature type="transmembrane region" description="Helical" evidence="1">
    <location>
        <begin position="41"/>
        <end position="59"/>
    </location>
</feature>
<feature type="topological domain" description="Cytoplasmic" evidence="9">
    <location>
        <begin position="60"/>
        <end position="64"/>
    </location>
</feature>
<feature type="intramembrane region" description="Discontinuously helical" evidence="1">
    <location>
        <begin position="65"/>
        <end position="74"/>
    </location>
</feature>
<feature type="topological domain" description="Cytoplasmic" evidence="9">
    <location>
        <begin position="75"/>
        <end position="85"/>
    </location>
</feature>
<feature type="transmembrane region" description="Helical" evidence="1">
    <location>
        <begin position="86"/>
        <end position="107"/>
    </location>
</feature>
<feature type="topological domain" description="Extracellular" evidence="9">
    <location>
        <begin position="108"/>
        <end position="127"/>
    </location>
</feature>
<feature type="transmembrane region" description="Helical" evidence="1">
    <location>
        <begin position="128"/>
        <end position="148"/>
    </location>
</feature>
<feature type="topological domain" description="Cytoplasmic" evidence="9">
    <location>
        <begin position="149"/>
        <end position="156"/>
    </location>
</feature>
<feature type="transmembrane region" description="Helical" evidence="1">
    <location>
        <begin position="157"/>
        <end position="176"/>
    </location>
</feature>
<feature type="topological domain" description="Extracellular" evidence="9">
    <location>
        <begin position="177"/>
        <end position="180"/>
    </location>
</feature>
<feature type="intramembrane region" description="Discontinuously helical" evidence="1">
    <location>
        <begin position="181"/>
        <end position="193"/>
    </location>
</feature>
<feature type="topological domain" description="Extracellular" evidence="9">
    <location>
        <begin position="194"/>
        <end position="201"/>
    </location>
</feature>
<feature type="transmembrane region" description="Helical" evidence="1">
    <location>
        <begin position="202"/>
        <end position="222"/>
    </location>
</feature>
<feature type="topological domain" description="Cytoplasmic" evidence="9">
    <location>
        <begin position="223"/>
        <end position="271"/>
    </location>
</feature>
<feature type="region of interest" description="Disordered" evidence="3">
    <location>
        <begin position="251"/>
        <end position="271"/>
    </location>
</feature>
<feature type="short sequence motif" description="NPA 1" evidence="1">
    <location>
        <begin position="68"/>
        <end position="70"/>
    </location>
</feature>
<feature type="short sequence motif" description="NPA 2" evidence="1">
    <location>
        <begin position="184"/>
        <end position="186"/>
    </location>
</feature>
<feature type="compositionally biased region" description="Polar residues" evidence="3">
    <location>
        <begin position="261"/>
        <end position="271"/>
    </location>
</feature>
<feature type="modified residue" description="Phosphoserine" evidence="11 12">
    <location>
        <position position="256"/>
    </location>
</feature>
<feature type="modified residue" description="Phosphoserine" evidence="11 12">
    <location>
        <position position="261"/>
    </location>
</feature>
<feature type="modified residue" description="Phosphoserine" evidence="11">
    <location>
        <position position="264"/>
    </location>
</feature>
<feature type="modified residue" description="Phosphoserine" evidence="11">
    <location>
        <position position="269"/>
    </location>
</feature>
<feature type="glycosylation site" description="N-linked (GlcNAc...) asparagine" evidence="2">
    <location>
        <position position="124"/>
    </location>
</feature>
<feature type="sequence conflict" description="In Ref. 4; AAI28706." evidence="9" ref="4">
    <original>I</original>
    <variation>T</variation>
    <location>
        <position position="54"/>
    </location>
</feature>
<reference key="1">
    <citation type="journal article" date="1993" name="Nature">
        <title>Cloning and expression of apical membrane water channel of rat kidney collecting tubule.</title>
        <authorList>
            <person name="Fushimi K."/>
            <person name="Uchida S."/>
            <person name="Hara Y."/>
            <person name="Hirata Y."/>
            <person name="Marumo F."/>
            <person name="Sasaki S."/>
        </authorList>
    </citation>
    <scope>NUCLEOTIDE SEQUENCE [MRNA]</scope>
    <scope>FUNCTION</scope>
    <scope>TRANSPORTER ACTIVITY</scope>
    <scope>SUBCELLULAR LOCATION</scope>
    <scope>TISSUE SPECIFICITY</scope>
    <source>
        <tissue>Kidney</tissue>
    </source>
</reference>
<reference key="2">
    <citation type="journal article" date="1993" name="Biochem. Biophys. Res. Commun.">
        <title>Cloning of a novel rat kidney cDNA homologous to CHIP28 and WCH-CD water channels.</title>
        <authorList>
            <person name="Ma T."/>
            <person name="Frigeri A."/>
            <person name="Skach W."/>
            <person name="Verkman A.S."/>
        </authorList>
    </citation>
    <scope>NUCLEOTIDE SEQUENCE [MRNA]</scope>
    <source>
        <tissue>Kidney</tissue>
    </source>
</reference>
<reference key="3">
    <citation type="journal article" date="1994" name="Am. J. Physiol.">
        <title>Expression, functional analysis, and in situ hybridization of a cloned rat kidney collecting duct water channel.</title>
        <authorList>
            <person name="Ma T."/>
            <person name="Hasegawa H."/>
            <person name="Skach W."/>
            <person name="Frigeri A."/>
            <person name="Verkman A.S."/>
        </authorList>
    </citation>
    <scope>NUCLEOTIDE SEQUENCE [MRNA]</scope>
    <scope>FUNCTION</scope>
    <scope>TRANSPORTER ACTIVITY</scope>
    <scope>SUBCELLULAR LOCATION</scope>
    <scope>TISSUE SPECIFICITY</scope>
    <source>
        <tissue>Kidney</tissue>
    </source>
</reference>
<reference key="4">
    <citation type="journal article" date="2004" name="Genome Res.">
        <title>The status, quality, and expansion of the NIH full-length cDNA project: the Mammalian Gene Collection (MGC).</title>
        <authorList>
            <consortium name="The MGC Project Team"/>
        </authorList>
    </citation>
    <scope>NUCLEOTIDE SEQUENCE [LARGE SCALE MRNA]</scope>
    <source>
        <tissue>Kidney</tissue>
    </source>
</reference>
<reference key="5">
    <citation type="journal article" date="2006" name="Proc. Natl. Acad. Sci. U.S.A.">
        <title>Quantitative phosphoproteomics of vasopressin-sensitive renal cells: regulation of aquaporin-2 phosphorylation at two sites.</title>
        <authorList>
            <person name="Hoffert J.D."/>
            <person name="Pisitkun T."/>
            <person name="Wang G."/>
            <person name="Shen R.-F."/>
            <person name="Knepper M.A."/>
        </authorList>
    </citation>
    <scope>PHOSPHORYLATION [LARGE SCALE ANALYSIS] AT SER-256; SER-261; SER-264 AND SER-269</scope>
    <scope>IDENTIFICATION BY MASS SPECTROMETRY [LARGE SCALE ANALYSIS]</scope>
</reference>
<reference key="6">
    <citation type="journal article" date="2009" name="Am. J. Physiol.">
        <title>FAPP2 is required for aquaporin-2 apical sorting at trans-Golgi network in polarized MDCK cells.</title>
        <authorList>
            <person name="Yui N."/>
            <person name="Okutsu R."/>
            <person name="Sohara E."/>
            <person name="Rai T."/>
            <person name="Ohta A."/>
            <person name="Noda Y."/>
            <person name="Sasaki S."/>
            <person name="Uchida S."/>
        </authorList>
    </citation>
    <scope>SUBCELLULAR LOCATION</scope>
</reference>
<reference key="7">
    <citation type="journal article" date="2012" name="Nat. Commun.">
        <title>Quantitative maps of protein phosphorylation sites across 14 different rat organs and tissues.</title>
        <authorList>
            <person name="Lundby A."/>
            <person name="Secher A."/>
            <person name="Lage K."/>
            <person name="Nordsborg N.B."/>
            <person name="Dmytriyev A."/>
            <person name="Lundby C."/>
            <person name="Olsen J.V."/>
        </authorList>
    </citation>
    <scope>PHOSPHORYLATION [LARGE SCALE ANALYSIS] AT SER-256 AND SER-261</scope>
    <scope>IDENTIFICATION BY MASS SPECTROMETRY [LARGE SCALE ANALYSIS]</scope>
</reference>
<evidence type="ECO:0000250" key="1">
    <source>
        <dbReference type="UniProtKB" id="P41181"/>
    </source>
</evidence>
<evidence type="ECO:0000255" key="2"/>
<evidence type="ECO:0000256" key="3">
    <source>
        <dbReference type="SAM" id="MobiDB-lite"/>
    </source>
</evidence>
<evidence type="ECO:0000269" key="4">
    <source>
    </source>
</evidence>
<evidence type="ECO:0000269" key="5">
    <source>
    </source>
</evidence>
<evidence type="ECO:0000269" key="6">
    <source>
    </source>
</evidence>
<evidence type="ECO:0000303" key="7">
    <source>
    </source>
</evidence>
<evidence type="ECO:0000303" key="8">
    <source>
    </source>
</evidence>
<evidence type="ECO:0000305" key="9"/>
<evidence type="ECO:0000312" key="10">
    <source>
        <dbReference type="RGD" id="2142"/>
    </source>
</evidence>
<evidence type="ECO:0007744" key="11">
    <source>
    </source>
</evidence>
<evidence type="ECO:0007744" key="12">
    <source>
    </source>
</evidence>
<dbReference type="EMBL" id="D13906">
    <property type="protein sequence ID" value="BAA03006.1"/>
    <property type="molecule type" value="mRNA"/>
</dbReference>
<dbReference type="EMBL" id="L28112">
    <property type="protein sequence ID" value="AAA41478.1"/>
    <property type="status" value="ALT_INIT"/>
    <property type="molecule type" value="mRNA"/>
</dbReference>
<dbReference type="EMBL" id="BC128705">
    <property type="protein sequence ID" value="AAI28706.1"/>
    <property type="molecule type" value="mRNA"/>
</dbReference>
<dbReference type="PIR" id="JT0750">
    <property type="entry name" value="JT0750"/>
</dbReference>
<dbReference type="RefSeq" id="NP_037041.2">
    <property type="nucleotide sequence ID" value="NM_012909.2"/>
</dbReference>
<dbReference type="SMR" id="P34080"/>
<dbReference type="CORUM" id="P34080"/>
<dbReference type="DIP" id="DIP-46223N"/>
<dbReference type="FunCoup" id="P34080">
    <property type="interactions" value="71"/>
</dbReference>
<dbReference type="IntAct" id="P34080">
    <property type="interactions" value="4"/>
</dbReference>
<dbReference type="STRING" id="10116.ENSRNOP00000074297"/>
<dbReference type="GlyCosmos" id="P34080">
    <property type="glycosylation" value="1 site, No reported glycans"/>
</dbReference>
<dbReference type="GlyGen" id="P34080">
    <property type="glycosylation" value="5 sites"/>
</dbReference>
<dbReference type="iPTMnet" id="P34080"/>
<dbReference type="PhosphoSitePlus" id="P34080"/>
<dbReference type="PaxDb" id="10116-ENSRNOP00000000324"/>
<dbReference type="DNASU" id="25386"/>
<dbReference type="GeneID" id="25386"/>
<dbReference type="KEGG" id="rno:25386"/>
<dbReference type="UCSC" id="RGD:2142">
    <property type="organism name" value="rat"/>
</dbReference>
<dbReference type="AGR" id="RGD:2142"/>
<dbReference type="CTD" id="359"/>
<dbReference type="RGD" id="2142">
    <property type="gene designation" value="Aqp2"/>
</dbReference>
<dbReference type="eggNOG" id="KOG0223">
    <property type="taxonomic scope" value="Eukaryota"/>
</dbReference>
<dbReference type="InParanoid" id="P34080"/>
<dbReference type="PhylomeDB" id="P34080"/>
<dbReference type="TreeFam" id="TF312940"/>
<dbReference type="Reactome" id="R-RNO-432040">
    <property type="pathway name" value="Vasopressin regulates renal water homeostasis via Aquaporins"/>
</dbReference>
<dbReference type="Reactome" id="R-RNO-432047">
    <property type="pathway name" value="Passive transport by Aquaporins"/>
</dbReference>
<dbReference type="PRO" id="PR:P34080"/>
<dbReference type="Proteomes" id="UP000002494">
    <property type="component" value="Unplaced"/>
</dbReference>
<dbReference type="GO" id="GO:0016324">
    <property type="term" value="C:apical plasma membrane"/>
    <property type="evidence" value="ECO:0000314"/>
    <property type="project" value="UniProtKB"/>
</dbReference>
<dbReference type="GO" id="GO:0016323">
    <property type="term" value="C:basolateral plasma membrane"/>
    <property type="evidence" value="ECO:0000314"/>
    <property type="project" value="RGD"/>
</dbReference>
<dbReference type="GO" id="GO:0030136">
    <property type="term" value="C:clathrin-coated vesicle"/>
    <property type="evidence" value="ECO:0000314"/>
    <property type="project" value="RGD"/>
</dbReference>
<dbReference type="GO" id="GO:0005737">
    <property type="term" value="C:cytoplasm"/>
    <property type="evidence" value="ECO:0000266"/>
    <property type="project" value="RGD"/>
</dbReference>
<dbReference type="GO" id="GO:0031410">
    <property type="term" value="C:cytoplasmic vesicle"/>
    <property type="evidence" value="ECO:0000266"/>
    <property type="project" value="RGD"/>
</dbReference>
<dbReference type="GO" id="GO:0030659">
    <property type="term" value="C:cytoplasmic vesicle membrane"/>
    <property type="evidence" value="ECO:0007669"/>
    <property type="project" value="UniProtKB-SubCell"/>
</dbReference>
<dbReference type="GO" id="GO:0005769">
    <property type="term" value="C:early endosome"/>
    <property type="evidence" value="ECO:0000314"/>
    <property type="project" value="RGD"/>
</dbReference>
<dbReference type="GO" id="GO:0070382">
    <property type="term" value="C:exocytic vesicle"/>
    <property type="evidence" value="ECO:0000314"/>
    <property type="project" value="RGD"/>
</dbReference>
<dbReference type="GO" id="GO:0070062">
    <property type="term" value="C:extracellular exosome"/>
    <property type="evidence" value="ECO:0000266"/>
    <property type="project" value="RGD"/>
</dbReference>
<dbReference type="GO" id="GO:0098576">
    <property type="term" value="C:lumenal side of membrane"/>
    <property type="evidence" value="ECO:0000266"/>
    <property type="project" value="RGD"/>
</dbReference>
<dbReference type="GO" id="GO:0016020">
    <property type="term" value="C:membrane"/>
    <property type="evidence" value="ECO:0000266"/>
    <property type="project" value="RGD"/>
</dbReference>
<dbReference type="GO" id="GO:0048471">
    <property type="term" value="C:perinuclear region of cytoplasm"/>
    <property type="evidence" value="ECO:0000266"/>
    <property type="project" value="RGD"/>
</dbReference>
<dbReference type="GO" id="GO:0005886">
    <property type="term" value="C:plasma membrane"/>
    <property type="evidence" value="ECO:0000315"/>
    <property type="project" value="UniProtKB"/>
</dbReference>
<dbReference type="GO" id="GO:0032991">
    <property type="term" value="C:protein-containing complex"/>
    <property type="evidence" value="ECO:0000314"/>
    <property type="project" value="RGD"/>
</dbReference>
<dbReference type="GO" id="GO:0055037">
    <property type="term" value="C:recycling endosome"/>
    <property type="evidence" value="ECO:0000266"/>
    <property type="project" value="RGD"/>
</dbReference>
<dbReference type="GO" id="GO:0005802">
    <property type="term" value="C:trans-Golgi network"/>
    <property type="evidence" value="ECO:0000314"/>
    <property type="project" value="RGD"/>
</dbReference>
<dbReference type="GO" id="GO:0003779">
    <property type="term" value="F:actin binding"/>
    <property type="evidence" value="ECO:0000314"/>
    <property type="project" value="RGD"/>
</dbReference>
<dbReference type="GO" id="GO:0015168">
    <property type="term" value="F:glycerol transmembrane transporter activity"/>
    <property type="evidence" value="ECO:0000266"/>
    <property type="project" value="RGD"/>
</dbReference>
<dbReference type="GO" id="GO:0030165">
    <property type="term" value="F:PDZ domain binding"/>
    <property type="evidence" value="ECO:0000353"/>
    <property type="project" value="RGD"/>
</dbReference>
<dbReference type="GO" id="GO:0015250">
    <property type="term" value="F:water channel activity"/>
    <property type="evidence" value="ECO:0000250"/>
    <property type="project" value="UniProtKB"/>
</dbReference>
<dbReference type="GO" id="GO:0005372">
    <property type="term" value="F:water transmembrane transporter activity"/>
    <property type="evidence" value="ECO:0000315"/>
    <property type="project" value="UniProtKB"/>
</dbReference>
<dbReference type="GO" id="GO:0030042">
    <property type="term" value="P:actin filament depolymerization"/>
    <property type="evidence" value="ECO:0000314"/>
    <property type="project" value="RGD"/>
</dbReference>
<dbReference type="GO" id="GO:0007015">
    <property type="term" value="P:actin filament organization"/>
    <property type="evidence" value="ECO:0000266"/>
    <property type="project" value="RGD"/>
</dbReference>
<dbReference type="GO" id="GO:0006884">
    <property type="term" value="P:cell volume homeostasis"/>
    <property type="evidence" value="ECO:0000315"/>
    <property type="project" value="RGD"/>
</dbReference>
<dbReference type="GO" id="GO:0071280">
    <property type="term" value="P:cellular response to copper ion"/>
    <property type="evidence" value="ECO:0000266"/>
    <property type="project" value="RGD"/>
</dbReference>
<dbReference type="GO" id="GO:0071288">
    <property type="term" value="P:cellular response to mercury ion"/>
    <property type="evidence" value="ECO:0000266"/>
    <property type="project" value="RGD"/>
</dbReference>
<dbReference type="GO" id="GO:0042631">
    <property type="term" value="P:cellular response to water deprivation"/>
    <property type="evidence" value="ECO:0000314"/>
    <property type="project" value="RGD"/>
</dbReference>
<dbReference type="GO" id="GO:0007565">
    <property type="term" value="P:female pregnancy"/>
    <property type="evidence" value="ECO:0000270"/>
    <property type="project" value="RGD"/>
</dbReference>
<dbReference type="GO" id="GO:0015793">
    <property type="term" value="P:glycerol transmembrane transport"/>
    <property type="evidence" value="ECO:0000266"/>
    <property type="project" value="RGD"/>
</dbReference>
<dbReference type="GO" id="GO:0006972">
    <property type="term" value="P:hyperosmotic response"/>
    <property type="evidence" value="ECO:0000270"/>
    <property type="project" value="RGD"/>
</dbReference>
<dbReference type="GO" id="GO:0072205">
    <property type="term" value="P:metanephric collecting duct development"/>
    <property type="evidence" value="ECO:0000266"/>
    <property type="project" value="RGD"/>
</dbReference>
<dbReference type="GO" id="GO:0051928">
    <property type="term" value="P:positive regulation of calcium ion transport"/>
    <property type="evidence" value="ECO:0000315"/>
    <property type="project" value="RGD"/>
</dbReference>
<dbReference type="GO" id="GO:0051289">
    <property type="term" value="P:protein homotetramerization"/>
    <property type="evidence" value="ECO:0000250"/>
    <property type="project" value="UniProtKB"/>
</dbReference>
<dbReference type="GO" id="GO:0003091">
    <property type="term" value="P:renal water homeostasis"/>
    <property type="evidence" value="ECO:0000250"/>
    <property type="project" value="UniProtKB"/>
</dbReference>
<dbReference type="GO" id="GO:0003097">
    <property type="term" value="P:renal water transport"/>
    <property type="evidence" value="ECO:0000266"/>
    <property type="project" value="RGD"/>
</dbReference>
<dbReference type="GO" id="GO:0051592">
    <property type="term" value="P:response to calcium ion"/>
    <property type="evidence" value="ECO:0000270"/>
    <property type="project" value="RGD"/>
</dbReference>
<dbReference type="GO" id="GO:0033762">
    <property type="term" value="P:response to glucagon"/>
    <property type="evidence" value="ECO:0000270"/>
    <property type="project" value="RGD"/>
</dbReference>
<dbReference type="GO" id="GO:0009725">
    <property type="term" value="P:response to hormone"/>
    <property type="evidence" value="ECO:0000270"/>
    <property type="project" value="RGD"/>
</dbReference>
<dbReference type="GO" id="GO:0032496">
    <property type="term" value="P:response to lipopolysaccharide"/>
    <property type="evidence" value="ECO:0000270"/>
    <property type="project" value="RGD"/>
</dbReference>
<dbReference type="GO" id="GO:0009651">
    <property type="term" value="P:response to salt stress"/>
    <property type="evidence" value="ECO:0000270"/>
    <property type="project" value="RGD"/>
</dbReference>
<dbReference type="GO" id="GO:0042594">
    <property type="term" value="P:response to starvation"/>
    <property type="evidence" value="ECO:0000270"/>
    <property type="project" value="RGD"/>
</dbReference>
<dbReference type="GO" id="GO:0006833">
    <property type="term" value="P:water transport"/>
    <property type="evidence" value="ECO:0000315"/>
    <property type="project" value="UniProtKB"/>
</dbReference>
<dbReference type="CDD" id="cd00333">
    <property type="entry name" value="MIP"/>
    <property type="match status" value="1"/>
</dbReference>
<dbReference type="FunFam" id="1.20.1080.10:FF:000003">
    <property type="entry name" value="Lens fiber major intrinsic"/>
    <property type="match status" value="1"/>
</dbReference>
<dbReference type="Gene3D" id="1.20.1080.10">
    <property type="entry name" value="Glycerol uptake facilitator protein"/>
    <property type="match status" value="1"/>
</dbReference>
<dbReference type="InterPro" id="IPR023271">
    <property type="entry name" value="Aquaporin-like"/>
</dbReference>
<dbReference type="InterPro" id="IPR034294">
    <property type="entry name" value="Aquaporin_transptr"/>
</dbReference>
<dbReference type="InterPro" id="IPR000425">
    <property type="entry name" value="MIP"/>
</dbReference>
<dbReference type="InterPro" id="IPR022357">
    <property type="entry name" value="MIP_CS"/>
</dbReference>
<dbReference type="NCBIfam" id="TIGR00861">
    <property type="entry name" value="MIP"/>
    <property type="match status" value="1"/>
</dbReference>
<dbReference type="PANTHER" id="PTHR19139">
    <property type="entry name" value="AQUAPORIN TRANSPORTER"/>
    <property type="match status" value="1"/>
</dbReference>
<dbReference type="PANTHER" id="PTHR19139:SF45">
    <property type="entry name" value="AQUAPORIN-2"/>
    <property type="match status" value="1"/>
</dbReference>
<dbReference type="Pfam" id="PF00230">
    <property type="entry name" value="MIP"/>
    <property type="match status" value="1"/>
</dbReference>
<dbReference type="PRINTS" id="PR02014">
    <property type="entry name" value="AQUAPORIN2"/>
</dbReference>
<dbReference type="PRINTS" id="PR00783">
    <property type="entry name" value="MINTRINSICP"/>
</dbReference>
<dbReference type="SUPFAM" id="SSF81338">
    <property type="entry name" value="Aquaporin-like"/>
    <property type="match status" value="1"/>
</dbReference>
<dbReference type="PROSITE" id="PS00221">
    <property type="entry name" value="MIP"/>
    <property type="match status" value="1"/>
</dbReference>
<comment type="function">
    <text evidence="1 5 6">Forms a water-specific channel that provides the plasma membranes of renal collecting duct with high permeability to water, thereby permitting water to move in the direction of an osmotic gradient (PubMed:7508187, PubMed:8429910). Plays an essential role in renal water homeostasis (By similarity). Could also be permeable to glycerol (By similarity).</text>
</comment>
<comment type="catalytic activity">
    <reaction evidence="5 6">
        <text>H2O(in) = H2O(out)</text>
        <dbReference type="Rhea" id="RHEA:29667"/>
        <dbReference type="ChEBI" id="CHEBI:15377"/>
    </reaction>
</comment>
<comment type="catalytic activity">
    <reaction evidence="1">
        <text>glycerol(in) = glycerol(out)</text>
        <dbReference type="Rhea" id="RHEA:29675"/>
        <dbReference type="ChEBI" id="CHEBI:17754"/>
    </reaction>
</comment>
<comment type="subunit">
    <text evidence="1">Homotetramer.</text>
</comment>
<comment type="subcellular location">
    <subcellularLocation>
        <location evidence="4 6">Apical cell membrane</location>
        <topology evidence="1">Multi-pass membrane protein</topology>
    </subcellularLocation>
    <subcellularLocation>
        <location evidence="4">Basolateral cell membrane</location>
        <topology evidence="1">Multi-pass membrane protein</topology>
    </subcellularLocation>
    <subcellularLocation>
        <location evidence="5">Cell membrane</location>
        <topology evidence="1">Multi-pass membrane protein</topology>
    </subcellularLocation>
    <subcellularLocation>
        <location evidence="4">Cytoplasmic vesicle membrane</location>
        <topology evidence="1">Multi-pass membrane protein</topology>
    </subcellularLocation>
    <subcellularLocation>
        <location evidence="4">Golgi apparatus</location>
        <location evidence="4">trans-Golgi network membrane</location>
        <topology evidence="1">Multi-pass membrane protein</topology>
    </subcellularLocation>
    <text evidence="4">Shuttles from vesicles to the apical membrane. Vasopressin-regulated phosphorylation is required for translocation to the apical cell membrane. PLEKHA8/FAPP2 is required to transport AQP2 from the TGN to sites where AQP2 is phosphorylated.</text>
</comment>
<comment type="tissue specificity">
    <text evidence="5 6">Detected in kidney, in cortical and the medullary collecting tubules (at protein level) (PubMed:8429910). Detected in kidney medulla and cortex (PubMed:7508187, PubMed:8429910).</text>
</comment>
<comment type="domain">
    <text evidence="1">Aquaporins contain two tandem repeats each containing three membrane-spanning domains and a pore-forming loop with the signature motif Asn-Pro-Ala (NPA).</text>
</comment>
<comment type="PTM">
    <text evidence="1">Ser-256 phosphorylation is necessary and sufficient for expression at the apical membrane. Endocytosis is not phosphorylation-dependent.</text>
</comment>
<comment type="PTM">
    <text evidence="1">N-glycosylated.</text>
</comment>
<comment type="similarity">
    <text evidence="9">Belongs to the MIP/aquaporin (TC 1.A.8) family.</text>
</comment>
<comment type="sequence caution" evidence="9">
    <conflict type="erroneous initiation">
        <sequence resource="EMBL-CDS" id="AAA41478"/>
    </conflict>
</comment>
<gene>
    <name evidence="10" type="primary">Aqp2</name>
</gene>
<accession>P34080</accession>
<accession>A1A5L4</accession>
<proteinExistence type="evidence at protein level"/>
<protein>
    <recommendedName>
        <fullName evidence="7">Aquaporin-2</fullName>
        <shortName>AQP-2</shortName>
    </recommendedName>
    <alternativeName>
        <fullName>ADH water channel</fullName>
    </alternativeName>
    <alternativeName>
        <fullName>Aquaporin-CD</fullName>
        <shortName>AQP-CD</shortName>
    </alternativeName>
    <alternativeName>
        <fullName>Collecting duct water channel protein</fullName>
    </alternativeName>
    <alternativeName>
        <fullName evidence="8">WCH-CD</fullName>
    </alternativeName>
    <alternativeName>
        <fullName>Water channel protein for renal collecting duct</fullName>
    </alternativeName>
</protein>
<name>AQP2_RAT</name>
<keyword id="KW-1003">Cell membrane</keyword>
<keyword id="KW-0968">Cytoplasmic vesicle</keyword>
<keyword id="KW-0325">Glycoprotein</keyword>
<keyword id="KW-0333">Golgi apparatus</keyword>
<keyword id="KW-0472">Membrane</keyword>
<keyword id="KW-0597">Phosphoprotein</keyword>
<keyword id="KW-1185">Reference proteome</keyword>
<keyword id="KW-0677">Repeat</keyword>
<keyword id="KW-0812">Transmembrane</keyword>
<keyword id="KW-1133">Transmembrane helix</keyword>
<keyword id="KW-0813">Transport</keyword>
<sequence length="271" mass="28931">MWELRSIAFSRAVLAEFLATLLFVFFGLGSALQWASSPPSVLQIAVAFGLGIGILVQALGHVSGAHINPAVTVACLVGCHVSFLRAAFYVAAQLLGAVAGAAILHEITPVEIRGDLAVNALHNNATAGQAVTVELFLTMQLVLCIFASTDERRGDNLGSPALSIGFSVTLGHLLGIYFTGCSMNPARSLAPAVVTGKFDDHWVFWIGPLVGAIIGSLLYNYLLFPSAKSLQERLAVLKGLEPDTDWEEREVRRRQSVELHSPQSLPRGSKA</sequence>